<evidence type="ECO:0000255" key="1">
    <source>
        <dbReference type="HAMAP-Rule" id="MF_01616"/>
    </source>
</evidence>
<evidence type="ECO:0000305" key="2"/>
<proteinExistence type="inferred from homology"/>
<keyword id="KW-0998">Cell outer membrane</keyword>
<keyword id="KW-0961">Cell wall biogenesis/degradation</keyword>
<keyword id="KW-0449">Lipoprotein</keyword>
<keyword id="KW-0456">Lyase</keyword>
<keyword id="KW-0472">Membrane</keyword>
<keyword id="KW-0564">Palmitate</keyword>
<keyword id="KW-1185">Reference proteome</keyword>
<keyword id="KW-0732">Signal</keyword>
<dbReference type="EC" id="4.2.2.n1" evidence="1"/>
<dbReference type="EMBL" id="CP000783">
    <property type="protein sequence ID" value="ABU75627.1"/>
    <property type="status" value="ALT_INIT"/>
    <property type="molecule type" value="Genomic_DNA"/>
</dbReference>
<dbReference type="SMR" id="A7MLX9"/>
<dbReference type="CAZy" id="GH23">
    <property type="family name" value="Glycoside Hydrolase Family 23"/>
</dbReference>
<dbReference type="KEGG" id="esa:ESA_00328"/>
<dbReference type="PATRIC" id="fig|290339.8.peg.291"/>
<dbReference type="HOGENOM" id="CLU_044583_0_0_6"/>
<dbReference type="Proteomes" id="UP000000260">
    <property type="component" value="Chromosome"/>
</dbReference>
<dbReference type="GO" id="GO:0009279">
    <property type="term" value="C:cell outer membrane"/>
    <property type="evidence" value="ECO:0007669"/>
    <property type="project" value="UniProtKB-SubCell"/>
</dbReference>
<dbReference type="GO" id="GO:0016798">
    <property type="term" value="F:hydrolase activity, acting on glycosyl bonds"/>
    <property type="evidence" value="ECO:0007669"/>
    <property type="project" value="InterPro"/>
</dbReference>
<dbReference type="GO" id="GO:0008933">
    <property type="term" value="F:peptidoglycan lytic transglycosylase activity"/>
    <property type="evidence" value="ECO:0007669"/>
    <property type="project" value="UniProtKB-UniRule"/>
</dbReference>
<dbReference type="GO" id="GO:0016998">
    <property type="term" value="P:cell wall macromolecule catabolic process"/>
    <property type="evidence" value="ECO:0007669"/>
    <property type="project" value="UniProtKB-UniRule"/>
</dbReference>
<dbReference type="GO" id="GO:0071555">
    <property type="term" value="P:cell wall organization"/>
    <property type="evidence" value="ECO:0007669"/>
    <property type="project" value="UniProtKB-KW"/>
</dbReference>
<dbReference type="GO" id="GO:0000270">
    <property type="term" value="P:peptidoglycan metabolic process"/>
    <property type="evidence" value="ECO:0007669"/>
    <property type="project" value="InterPro"/>
</dbReference>
<dbReference type="CDD" id="cd16893">
    <property type="entry name" value="LT_MltC_MltE"/>
    <property type="match status" value="1"/>
</dbReference>
<dbReference type="FunFam" id="1.10.530.10:FF:000002">
    <property type="entry name" value="Membrane-bound lytic murein transglycosylase C"/>
    <property type="match status" value="1"/>
</dbReference>
<dbReference type="Gene3D" id="1.10.530.10">
    <property type="match status" value="1"/>
</dbReference>
<dbReference type="HAMAP" id="MF_01616">
    <property type="entry name" value="MltC"/>
    <property type="match status" value="1"/>
</dbReference>
<dbReference type="InterPro" id="IPR023346">
    <property type="entry name" value="Lysozyme-like_dom_sf"/>
</dbReference>
<dbReference type="InterPro" id="IPR023664">
    <property type="entry name" value="Murein_transglycosylaseC"/>
</dbReference>
<dbReference type="InterPro" id="IPR024570">
    <property type="entry name" value="Murein_transglycosylaseC_N"/>
</dbReference>
<dbReference type="InterPro" id="IPR000189">
    <property type="entry name" value="Transglyc_AS"/>
</dbReference>
<dbReference type="InterPro" id="IPR008258">
    <property type="entry name" value="Transglycosylase_SLT_dom_1"/>
</dbReference>
<dbReference type="NCBIfam" id="NF008670">
    <property type="entry name" value="PRK11671.1"/>
    <property type="match status" value="1"/>
</dbReference>
<dbReference type="PANTHER" id="PTHR37423:SF2">
    <property type="entry name" value="MEMBRANE-BOUND LYTIC MUREIN TRANSGLYCOSYLASE C"/>
    <property type="match status" value="1"/>
</dbReference>
<dbReference type="PANTHER" id="PTHR37423">
    <property type="entry name" value="SOLUBLE LYTIC MUREIN TRANSGLYCOSYLASE-RELATED"/>
    <property type="match status" value="1"/>
</dbReference>
<dbReference type="Pfam" id="PF11873">
    <property type="entry name" value="Mltc_N"/>
    <property type="match status" value="1"/>
</dbReference>
<dbReference type="Pfam" id="PF01464">
    <property type="entry name" value="SLT"/>
    <property type="match status" value="1"/>
</dbReference>
<dbReference type="SUPFAM" id="SSF53955">
    <property type="entry name" value="Lysozyme-like"/>
    <property type="match status" value="1"/>
</dbReference>
<dbReference type="PROSITE" id="PS51257">
    <property type="entry name" value="PROKAR_LIPOPROTEIN"/>
    <property type="match status" value="1"/>
</dbReference>
<dbReference type="PROSITE" id="PS00922">
    <property type="entry name" value="TRANSGLYCOSYLASE"/>
    <property type="match status" value="1"/>
</dbReference>
<feature type="signal peptide" evidence="1">
    <location>
        <begin position="1"/>
        <end position="16"/>
    </location>
</feature>
<feature type="chain" id="PRO_0000335578" description="Membrane-bound lytic murein transglycosylase C">
    <location>
        <begin position="17"/>
        <end position="360"/>
    </location>
</feature>
<feature type="lipid moiety-binding region" description="N-palmitoyl cysteine" evidence="1">
    <location>
        <position position="17"/>
    </location>
</feature>
<feature type="lipid moiety-binding region" description="S-diacylglycerol cysteine" evidence="1">
    <location>
        <position position="17"/>
    </location>
</feature>
<accession>A7MLX9</accession>
<protein>
    <recommendedName>
        <fullName evidence="1">Membrane-bound lytic murein transglycosylase C</fullName>
        <ecNumber evidence="1">4.2.2.n1</ecNumber>
    </recommendedName>
    <alternativeName>
        <fullName evidence="1">Murein lyase C</fullName>
    </alternativeName>
</protein>
<gene>
    <name evidence="1" type="primary">mltC</name>
    <name type="ordered locus">ESA_00328</name>
</gene>
<comment type="function">
    <text evidence="1">Murein-degrading enzyme. May play a role in recycling of muropeptides during cell elongation and/or cell division.</text>
</comment>
<comment type="catalytic activity">
    <reaction evidence="1">
        <text>Exolytic cleavage of the (1-&gt;4)-beta-glycosidic linkage between N-acetylmuramic acid (MurNAc) and N-acetylglucosamine (GlcNAc) residues in peptidoglycan, from either the reducing or the non-reducing ends of the peptidoglycan chains, with concomitant formation of a 1,6-anhydrobond in the MurNAc residue.</text>
        <dbReference type="EC" id="4.2.2.n1"/>
    </reaction>
</comment>
<comment type="subcellular location">
    <subcellularLocation>
        <location evidence="1">Cell outer membrane</location>
        <topology evidence="1">Lipid-anchor</topology>
    </subcellularLocation>
</comment>
<comment type="similarity">
    <text evidence="1">Belongs to the transglycosylase Slt family.</text>
</comment>
<comment type="sequence caution" evidence="2">
    <conflict type="erroneous initiation">
        <sequence resource="EMBL-CDS" id="ABU75627"/>
    </conflict>
</comment>
<reference key="1">
    <citation type="journal article" date="2010" name="PLoS ONE">
        <title>Genome sequence of Cronobacter sakazakii BAA-894 and comparative genomic hybridization analysis with other Cronobacter species.</title>
        <authorList>
            <person name="Kucerova E."/>
            <person name="Clifton S.W."/>
            <person name="Xia X.Q."/>
            <person name="Long F."/>
            <person name="Porwollik S."/>
            <person name="Fulton L."/>
            <person name="Fronick C."/>
            <person name="Minx P."/>
            <person name="Kyung K."/>
            <person name="Warren W."/>
            <person name="Fulton R."/>
            <person name="Feng D."/>
            <person name="Wollam A."/>
            <person name="Shah N."/>
            <person name="Bhonagiri V."/>
            <person name="Nash W.E."/>
            <person name="Hallsworth-Pepin K."/>
            <person name="Wilson R.K."/>
            <person name="McClelland M."/>
            <person name="Forsythe S.J."/>
        </authorList>
    </citation>
    <scope>NUCLEOTIDE SEQUENCE [LARGE SCALE GENOMIC DNA]</scope>
    <source>
        <strain>ATCC BAA-894</strain>
    </source>
</reference>
<organism>
    <name type="scientific">Cronobacter sakazakii (strain ATCC BAA-894)</name>
    <name type="common">Enterobacter sakazakii</name>
    <dbReference type="NCBI Taxonomy" id="290339"/>
    <lineage>
        <taxon>Bacteria</taxon>
        <taxon>Pseudomonadati</taxon>
        <taxon>Pseudomonadota</taxon>
        <taxon>Gammaproteobacteria</taxon>
        <taxon>Enterobacterales</taxon>
        <taxon>Enterobacteriaceae</taxon>
        <taxon>Cronobacter</taxon>
    </lineage>
</organism>
<name>MLTC_CROS8</name>
<sequence>MKKIFALALIAPLLISCSSKKNAENAYNEAWIKDTNGFDILMGQFAHNIENIWGFNEVLIAGPKDYVKYTDQYQTRSHINFDEGTITVETIAGTEPAARLRRAIITTLLMGDDPGSIDLYSDVNDIQISREPFLYGQVVDNTGQPIRWEGRASKFADYLLQTHLKSRSNGLRIIYSVTINLVPNHLDKRAHKYIGMVRQASRKYGVDESLILAIMQTESSFNPYAVSHADALGLMQVVQHSAGKDVFRSQGKWGTPSRSYLFDPQSNIDTGTAYLAMLNNVYLGGITNPTSRRYAVITAYNGGAGSVLRVFSSDKDQAVNIINQLSPGDVYETLTNRHPSAESRRYLYKVNTAQKMYRRK</sequence>